<gene>
    <name evidence="1" type="primary">ruvA</name>
    <name type="ordered locus">PM0977</name>
</gene>
<feature type="chain" id="PRO_0000094659" description="Holliday junction branch migration complex subunit RuvA">
    <location>
        <begin position="1"/>
        <end position="204"/>
    </location>
</feature>
<feature type="region of interest" description="Domain I" evidence="1">
    <location>
        <begin position="1"/>
        <end position="64"/>
    </location>
</feature>
<feature type="region of interest" description="Domain II" evidence="1">
    <location>
        <begin position="65"/>
        <end position="143"/>
    </location>
</feature>
<feature type="region of interest" description="Flexible linker" evidence="1">
    <location>
        <begin position="144"/>
        <end position="155"/>
    </location>
</feature>
<feature type="region of interest" description="Domain III" evidence="1">
    <location>
        <begin position="156"/>
        <end position="204"/>
    </location>
</feature>
<accession>P57893</accession>
<organism>
    <name type="scientific">Pasteurella multocida (strain Pm70)</name>
    <dbReference type="NCBI Taxonomy" id="272843"/>
    <lineage>
        <taxon>Bacteria</taxon>
        <taxon>Pseudomonadati</taxon>
        <taxon>Pseudomonadota</taxon>
        <taxon>Gammaproteobacteria</taxon>
        <taxon>Pasteurellales</taxon>
        <taxon>Pasteurellaceae</taxon>
        <taxon>Pasteurella</taxon>
    </lineage>
</organism>
<evidence type="ECO:0000255" key="1">
    <source>
        <dbReference type="HAMAP-Rule" id="MF_00031"/>
    </source>
</evidence>
<dbReference type="EMBL" id="AE004439">
    <property type="protein sequence ID" value="AAK03061.1"/>
    <property type="molecule type" value="Genomic_DNA"/>
</dbReference>
<dbReference type="RefSeq" id="WP_005754448.1">
    <property type="nucleotide sequence ID" value="NC_002663.1"/>
</dbReference>
<dbReference type="SMR" id="P57893"/>
<dbReference type="STRING" id="272843.PM0977"/>
<dbReference type="EnsemblBacteria" id="AAK03061">
    <property type="protein sequence ID" value="AAK03061"/>
    <property type="gene ID" value="PM0977"/>
</dbReference>
<dbReference type="GeneID" id="77206288"/>
<dbReference type="KEGG" id="pmu:PM0977"/>
<dbReference type="HOGENOM" id="CLU_087936_0_0_6"/>
<dbReference type="OrthoDB" id="5293449at2"/>
<dbReference type="Proteomes" id="UP000000809">
    <property type="component" value="Chromosome"/>
</dbReference>
<dbReference type="GO" id="GO:0005737">
    <property type="term" value="C:cytoplasm"/>
    <property type="evidence" value="ECO:0007669"/>
    <property type="project" value="UniProtKB-SubCell"/>
</dbReference>
<dbReference type="GO" id="GO:0009379">
    <property type="term" value="C:Holliday junction helicase complex"/>
    <property type="evidence" value="ECO:0007669"/>
    <property type="project" value="InterPro"/>
</dbReference>
<dbReference type="GO" id="GO:0048476">
    <property type="term" value="C:Holliday junction resolvase complex"/>
    <property type="evidence" value="ECO:0007669"/>
    <property type="project" value="UniProtKB-UniRule"/>
</dbReference>
<dbReference type="GO" id="GO:0005524">
    <property type="term" value="F:ATP binding"/>
    <property type="evidence" value="ECO:0007669"/>
    <property type="project" value="InterPro"/>
</dbReference>
<dbReference type="GO" id="GO:0000400">
    <property type="term" value="F:four-way junction DNA binding"/>
    <property type="evidence" value="ECO:0007669"/>
    <property type="project" value="UniProtKB-UniRule"/>
</dbReference>
<dbReference type="GO" id="GO:0009378">
    <property type="term" value="F:four-way junction helicase activity"/>
    <property type="evidence" value="ECO:0007669"/>
    <property type="project" value="InterPro"/>
</dbReference>
<dbReference type="GO" id="GO:0006310">
    <property type="term" value="P:DNA recombination"/>
    <property type="evidence" value="ECO:0007669"/>
    <property type="project" value="UniProtKB-UniRule"/>
</dbReference>
<dbReference type="GO" id="GO:0006281">
    <property type="term" value="P:DNA repair"/>
    <property type="evidence" value="ECO:0007669"/>
    <property type="project" value="UniProtKB-UniRule"/>
</dbReference>
<dbReference type="CDD" id="cd14332">
    <property type="entry name" value="UBA_RuvA_C"/>
    <property type="match status" value="1"/>
</dbReference>
<dbReference type="Gene3D" id="1.10.150.20">
    <property type="entry name" value="5' to 3' exonuclease, C-terminal subdomain"/>
    <property type="match status" value="1"/>
</dbReference>
<dbReference type="Gene3D" id="1.10.8.10">
    <property type="entry name" value="DNA helicase RuvA subunit, C-terminal domain"/>
    <property type="match status" value="1"/>
</dbReference>
<dbReference type="Gene3D" id="2.40.50.140">
    <property type="entry name" value="Nucleic acid-binding proteins"/>
    <property type="match status" value="1"/>
</dbReference>
<dbReference type="HAMAP" id="MF_00031">
    <property type="entry name" value="DNA_HJ_migration_RuvA"/>
    <property type="match status" value="1"/>
</dbReference>
<dbReference type="InterPro" id="IPR013849">
    <property type="entry name" value="DNA_helicase_Holl-junc_RuvA_I"/>
</dbReference>
<dbReference type="InterPro" id="IPR003583">
    <property type="entry name" value="Hlx-hairpin-Hlx_DNA-bd_motif"/>
</dbReference>
<dbReference type="InterPro" id="IPR012340">
    <property type="entry name" value="NA-bd_OB-fold"/>
</dbReference>
<dbReference type="InterPro" id="IPR000085">
    <property type="entry name" value="RuvA"/>
</dbReference>
<dbReference type="InterPro" id="IPR010994">
    <property type="entry name" value="RuvA_2-like"/>
</dbReference>
<dbReference type="InterPro" id="IPR011114">
    <property type="entry name" value="RuvA_C"/>
</dbReference>
<dbReference type="InterPro" id="IPR036267">
    <property type="entry name" value="RuvA_C_sf"/>
</dbReference>
<dbReference type="NCBIfam" id="TIGR00084">
    <property type="entry name" value="ruvA"/>
    <property type="match status" value="1"/>
</dbReference>
<dbReference type="Pfam" id="PF14520">
    <property type="entry name" value="HHH_5"/>
    <property type="match status" value="1"/>
</dbReference>
<dbReference type="Pfam" id="PF07499">
    <property type="entry name" value="RuvA_C"/>
    <property type="match status" value="1"/>
</dbReference>
<dbReference type="Pfam" id="PF01330">
    <property type="entry name" value="RuvA_N"/>
    <property type="match status" value="1"/>
</dbReference>
<dbReference type="SMART" id="SM00278">
    <property type="entry name" value="HhH1"/>
    <property type="match status" value="2"/>
</dbReference>
<dbReference type="SUPFAM" id="SSF46929">
    <property type="entry name" value="DNA helicase RuvA subunit, C-terminal domain"/>
    <property type="match status" value="1"/>
</dbReference>
<dbReference type="SUPFAM" id="SSF50249">
    <property type="entry name" value="Nucleic acid-binding proteins"/>
    <property type="match status" value="1"/>
</dbReference>
<dbReference type="SUPFAM" id="SSF47781">
    <property type="entry name" value="RuvA domain 2-like"/>
    <property type="match status" value="1"/>
</dbReference>
<keyword id="KW-0963">Cytoplasm</keyword>
<keyword id="KW-0227">DNA damage</keyword>
<keyword id="KW-0233">DNA recombination</keyword>
<keyword id="KW-0234">DNA repair</keyword>
<keyword id="KW-0238">DNA-binding</keyword>
<keyword id="KW-1185">Reference proteome</keyword>
<proteinExistence type="inferred from homology"/>
<sequence length="204" mass="22638">MIGHLTGRLVEKHPPEILLDVQGVGYELLLPMTSFYQLPDIGQQTALFTHLVVREDAHLLFGFSQKTDRTLFRELIKTNGVGPKLALAILSAMSVEEFAYAIEREELSKLVKIPGVGKKTAERLLVELKGKFKGIQQEDFFIESQHLKQPEHALNEQDIPASEAISALIALGYKAAEAEKLVKKISKPALSSEQLIREALKAAL</sequence>
<name>RUVA_PASMU</name>
<reference key="1">
    <citation type="journal article" date="2001" name="Proc. Natl. Acad. Sci. U.S.A.">
        <title>Complete genomic sequence of Pasteurella multocida Pm70.</title>
        <authorList>
            <person name="May B.J."/>
            <person name="Zhang Q."/>
            <person name="Li L.L."/>
            <person name="Paustian M.L."/>
            <person name="Whittam T.S."/>
            <person name="Kapur V."/>
        </authorList>
    </citation>
    <scope>NUCLEOTIDE SEQUENCE [LARGE SCALE GENOMIC DNA]</scope>
    <source>
        <strain>Pm70</strain>
    </source>
</reference>
<protein>
    <recommendedName>
        <fullName evidence="1">Holliday junction branch migration complex subunit RuvA</fullName>
    </recommendedName>
</protein>
<comment type="function">
    <text evidence="1">The RuvA-RuvB-RuvC complex processes Holliday junction (HJ) DNA during genetic recombination and DNA repair, while the RuvA-RuvB complex plays an important role in the rescue of blocked DNA replication forks via replication fork reversal (RFR). RuvA specifically binds to HJ cruciform DNA, conferring on it an open structure. The RuvB hexamer acts as an ATP-dependent pump, pulling dsDNA into and through the RuvAB complex. HJ branch migration allows RuvC to scan DNA until it finds its consensus sequence, where it cleaves and resolves the cruciform DNA.</text>
</comment>
<comment type="subunit">
    <text evidence="1">Homotetramer. Forms an RuvA(8)-RuvB(12)-Holliday junction (HJ) complex. HJ DNA is sandwiched between 2 RuvA tetramers; dsDNA enters through RuvA and exits via RuvB. An RuvB hexamer assembles on each DNA strand where it exits the tetramer. Each RuvB hexamer is contacted by two RuvA subunits (via domain III) on 2 adjacent RuvB subunits; this complex drives branch migration. In the full resolvosome a probable DNA-RuvA(4)-RuvB(12)-RuvC(2) complex forms which resolves the HJ.</text>
</comment>
<comment type="subcellular location">
    <subcellularLocation>
        <location evidence="1">Cytoplasm</location>
    </subcellularLocation>
</comment>
<comment type="domain">
    <text evidence="1">Has three domains with a flexible linker between the domains II and III and assumes an 'L' shape. Domain III is highly mobile and contacts RuvB.</text>
</comment>
<comment type="similarity">
    <text evidence="1">Belongs to the RuvA family.</text>
</comment>